<feature type="chain" id="PRO_0000326244" description="Condensin-2 complex subunit H2">
    <location>
        <begin position="1"/>
        <end position="592"/>
    </location>
</feature>
<feature type="region of interest" description="Disordered" evidence="2">
    <location>
        <begin position="89"/>
        <end position="116"/>
    </location>
</feature>
<feature type="region of interest" description="Disordered" evidence="2">
    <location>
        <begin position="261"/>
        <end position="285"/>
    </location>
</feature>
<feature type="compositionally biased region" description="Polar residues" evidence="2">
    <location>
        <begin position="96"/>
        <end position="108"/>
    </location>
</feature>
<feature type="sequence conflict" description="In Ref. 2; AAI46716." evidence="3" ref="2">
    <original>Q</original>
    <variation>K</variation>
    <location>
        <position position="105"/>
    </location>
</feature>
<feature type="sequence conflict" description="In Ref. 2; AAI46716." evidence="3" ref="2">
    <original>S</original>
    <variation>N</variation>
    <location>
        <position position="110"/>
    </location>
</feature>
<feature type="sequence conflict" description="In Ref. 2; AAI46716." evidence="3" ref="2">
    <original>A</original>
    <variation>V</variation>
    <location>
        <position position="223"/>
    </location>
</feature>
<feature type="sequence conflict" description="In Ref. 2; AAI46716." evidence="3" ref="2">
    <original>AN</original>
    <variation>VS</variation>
    <location>
        <begin position="226"/>
        <end position="227"/>
    </location>
</feature>
<protein>
    <recommendedName>
        <fullName>Condensin-2 complex subunit H2</fullName>
    </recommendedName>
    <alternativeName>
        <fullName>Non-SMC condensin II complex subunit H2</fullName>
    </alternativeName>
</protein>
<reference key="1">
    <citation type="journal article" date="2013" name="Nature">
        <title>The zebrafish reference genome sequence and its relationship to the human genome.</title>
        <authorList>
            <person name="Howe K."/>
            <person name="Clark M.D."/>
            <person name="Torroja C.F."/>
            <person name="Torrance J."/>
            <person name="Berthelot C."/>
            <person name="Muffato M."/>
            <person name="Collins J.E."/>
            <person name="Humphray S."/>
            <person name="McLaren K."/>
            <person name="Matthews L."/>
            <person name="McLaren S."/>
            <person name="Sealy I."/>
            <person name="Caccamo M."/>
            <person name="Churcher C."/>
            <person name="Scott C."/>
            <person name="Barrett J.C."/>
            <person name="Koch R."/>
            <person name="Rauch G.J."/>
            <person name="White S."/>
            <person name="Chow W."/>
            <person name="Kilian B."/>
            <person name="Quintais L.T."/>
            <person name="Guerra-Assuncao J.A."/>
            <person name="Zhou Y."/>
            <person name="Gu Y."/>
            <person name="Yen J."/>
            <person name="Vogel J.H."/>
            <person name="Eyre T."/>
            <person name="Redmond S."/>
            <person name="Banerjee R."/>
            <person name="Chi J."/>
            <person name="Fu B."/>
            <person name="Langley E."/>
            <person name="Maguire S.F."/>
            <person name="Laird G.K."/>
            <person name="Lloyd D."/>
            <person name="Kenyon E."/>
            <person name="Donaldson S."/>
            <person name="Sehra H."/>
            <person name="Almeida-King J."/>
            <person name="Loveland J."/>
            <person name="Trevanion S."/>
            <person name="Jones M."/>
            <person name="Quail M."/>
            <person name="Willey D."/>
            <person name="Hunt A."/>
            <person name="Burton J."/>
            <person name="Sims S."/>
            <person name="McLay K."/>
            <person name="Plumb B."/>
            <person name="Davis J."/>
            <person name="Clee C."/>
            <person name="Oliver K."/>
            <person name="Clark R."/>
            <person name="Riddle C."/>
            <person name="Elliot D."/>
            <person name="Threadgold G."/>
            <person name="Harden G."/>
            <person name="Ware D."/>
            <person name="Begum S."/>
            <person name="Mortimore B."/>
            <person name="Kerry G."/>
            <person name="Heath P."/>
            <person name="Phillimore B."/>
            <person name="Tracey A."/>
            <person name="Corby N."/>
            <person name="Dunn M."/>
            <person name="Johnson C."/>
            <person name="Wood J."/>
            <person name="Clark S."/>
            <person name="Pelan S."/>
            <person name="Griffiths G."/>
            <person name="Smith M."/>
            <person name="Glithero R."/>
            <person name="Howden P."/>
            <person name="Barker N."/>
            <person name="Lloyd C."/>
            <person name="Stevens C."/>
            <person name="Harley J."/>
            <person name="Holt K."/>
            <person name="Panagiotidis G."/>
            <person name="Lovell J."/>
            <person name="Beasley H."/>
            <person name="Henderson C."/>
            <person name="Gordon D."/>
            <person name="Auger K."/>
            <person name="Wright D."/>
            <person name="Collins J."/>
            <person name="Raisen C."/>
            <person name="Dyer L."/>
            <person name="Leung K."/>
            <person name="Robertson L."/>
            <person name="Ambridge K."/>
            <person name="Leongamornlert D."/>
            <person name="McGuire S."/>
            <person name="Gilderthorp R."/>
            <person name="Griffiths C."/>
            <person name="Manthravadi D."/>
            <person name="Nichol S."/>
            <person name="Barker G."/>
            <person name="Whitehead S."/>
            <person name="Kay M."/>
            <person name="Brown J."/>
            <person name="Murnane C."/>
            <person name="Gray E."/>
            <person name="Humphries M."/>
            <person name="Sycamore N."/>
            <person name="Barker D."/>
            <person name="Saunders D."/>
            <person name="Wallis J."/>
            <person name="Babbage A."/>
            <person name="Hammond S."/>
            <person name="Mashreghi-Mohammadi M."/>
            <person name="Barr L."/>
            <person name="Martin S."/>
            <person name="Wray P."/>
            <person name="Ellington A."/>
            <person name="Matthews N."/>
            <person name="Ellwood M."/>
            <person name="Woodmansey R."/>
            <person name="Clark G."/>
            <person name="Cooper J."/>
            <person name="Tromans A."/>
            <person name="Grafham D."/>
            <person name="Skuce C."/>
            <person name="Pandian R."/>
            <person name="Andrews R."/>
            <person name="Harrison E."/>
            <person name="Kimberley A."/>
            <person name="Garnett J."/>
            <person name="Fosker N."/>
            <person name="Hall R."/>
            <person name="Garner P."/>
            <person name="Kelly D."/>
            <person name="Bird C."/>
            <person name="Palmer S."/>
            <person name="Gehring I."/>
            <person name="Berger A."/>
            <person name="Dooley C.M."/>
            <person name="Ersan-Urun Z."/>
            <person name="Eser C."/>
            <person name="Geiger H."/>
            <person name="Geisler M."/>
            <person name="Karotki L."/>
            <person name="Kirn A."/>
            <person name="Konantz J."/>
            <person name="Konantz M."/>
            <person name="Oberlander M."/>
            <person name="Rudolph-Geiger S."/>
            <person name="Teucke M."/>
            <person name="Lanz C."/>
            <person name="Raddatz G."/>
            <person name="Osoegawa K."/>
            <person name="Zhu B."/>
            <person name="Rapp A."/>
            <person name="Widaa S."/>
            <person name="Langford C."/>
            <person name="Yang F."/>
            <person name="Schuster S.C."/>
            <person name="Carter N.P."/>
            <person name="Harrow J."/>
            <person name="Ning Z."/>
            <person name="Herrero J."/>
            <person name="Searle S.M."/>
            <person name="Enright A."/>
            <person name="Geisler R."/>
            <person name="Plasterk R.H."/>
            <person name="Lee C."/>
            <person name="Westerfield M."/>
            <person name="de Jong P.J."/>
            <person name="Zon L.I."/>
            <person name="Postlethwait J.H."/>
            <person name="Nusslein-Volhard C."/>
            <person name="Hubbard T.J."/>
            <person name="Roest Crollius H."/>
            <person name="Rogers J."/>
            <person name="Stemple D.L."/>
        </authorList>
    </citation>
    <scope>NUCLEOTIDE SEQUENCE [LARGE SCALE GENOMIC DNA]</scope>
    <source>
        <strain>Tuebingen</strain>
    </source>
</reference>
<reference key="2">
    <citation type="submission" date="2007-06" db="EMBL/GenBank/DDBJ databases">
        <authorList>
            <consortium name="NIH - Zebrafish Gene Collection (ZGC) project"/>
        </authorList>
    </citation>
    <scope>NUCLEOTIDE SEQUENCE [LARGE SCALE MRNA]</scope>
    <source>
        <tissue>Embryo</tissue>
    </source>
</reference>
<organism>
    <name type="scientific">Danio rerio</name>
    <name type="common">Zebrafish</name>
    <name type="synonym">Brachydanio rerio</name>
    <dbReference type="NCBI Taxonomy" id="7955"/>
    <lineage>
        <taxon>Eukaryota</taxon>
        <taxon>Metazoa</taxon>
        <taxon>Chordata</taxon>
        <taxon>Craniata</taxon>
        <taxon>Vertebrata</taxon>
        <taxon>Euteleostomi</taxon>
        <taxon>Actinopterygii</taxon>
        <taxon>Neopterygii</taxon>
        <taxon>Teleostei</taxon>
        <taxon>Ostariophysi</taxon>
        <taxon>Cypriniformes</taxon>
        <taxon>Danionidae</taxon>
        <taxon>Danioninae</taxon>
        <taxon>Danio</taxon>
    </lineage>
</organism>
<proteinExistence type="evidence at transcript level"/>
<name>CNDH2_DANRE</name>
<sequence length="592" mass="67027">MDSVETRYAHLLQPLRDLTKNWDIDLASQLGEYLEELDQMTISFDGGKTMMNFAEAALLIQGSTCIYGRKVELLHTLVFQTLDYISNKNKKRDKQGSSSDGNQEQAPSGSEGDGCEFDEIEQDENVNTHNITMKDPTEPVRIIRLPPESLIPAESHEKQKYPLLSLKGELLGSCKDFRINTFTMDEAGLMRLGSNTHFLKGVAEVQRDFSVHLPEPLQIEGEAAAANGGYDEEVDGGAEVLPPLEDHGMEVESDEWVERHEAPSEGRMLRPRPAVQPVSEEPKQLKETVDPWKLHDPYATFGEDKPLKAGKCYKVPAGLDESGKRKRKGPSKLQDFGTWFNKAFETADRKLKNGPTFPDLNYIFVSKMDQRLKVQRQMLRKRGVFVSDEELKKTYLEPENVEDQVEVIRHPDADGDDYSDEEHDNLADDLEPAEHLDDQEQIFQDLHMSRMSYEDLVKKSVDLFLVNSQKYAQETALSRRVKDWEDSINPHLAAQEISPAFDIHEYGDRIVHALSNVGVKKSFAFVVRGKENTEACRYMLAALQLANDYTVEVDKVDGLDCSVDTMELTLLTTQRAHERLKTYNATAATDIP</sequence>
<dbReference type="EMBL" id="BX649398">
    <property type="protein sequence ID" value="CAI20824.1"/>
    <property type="molecule type" value="Genomic_DNA"/>
</dbReference>
<dbReference type="EMBL" id="BC146715">
    <property type="protein sequence ID" value="AAI46716.1"/>
    <property type="molecule type" value="mRNA"/>
</dbReference>
<dbReference type="RefSeq" id="NP_001038456.1">
    <property type="nucleotide sequence ID" value="NM_001044991.1"/>
</dbReference>
<dbReference type="RefSeq" id="XP_009298568.1">
    <property type="nucleotide sequence ID" value="XM_009300293.4"/>
</dbReference>
<dbReference type="RefSeq" id="XP_068075768.1">
    <property type="nucleotide sequence ID" value="XM_068219667.1"/>
</dbReference>
<dbReference type="FunCoup" id="Q5RH01">
    <property type="interactions" value="1931"/>
</dbReference>
<dbReference type="STRING" id="7955.ENSDARP00000040826"/>
<dbReference type="PaxDb" id="7955-ENSDARP00000040826"/>
<dbReference type="Ensembl" id="ENSDART00000040827">
    <property type="protein sequence ID" value="ENSDARP00000040826"/>
    <property type="gene ID" value="ENSDARG00000033757"/>
</dbReference>
<dbReference type="Ensembl" id="ENSDART00000190819">
    <property type="protein sequence ID" value="ENSDARP00000149771"/>
    <property type="gene ID" value="ENSDARG00000033757"/>
</dbReference>
<dbReference type="GeneID" id="562678"/>
<dbReference type="KEGG" id="dre:562678"/>
<dbReference type="AGR" id="ZFIN:ZDB-GENE-041210-172"/>
<dbReference type="CTD" id="29781"/>
<dbReference type="ZFIN" id="ZDB-GENE-041210-172">
    <property type="gene designation" value="ncaph2"/>
</dbReference>
<dbReference type="eggNOG" id="KOG2359">
    <property type="taxonomic scope" value="Eukaryota"/>
</dbReference>
<dbReference type="HOGENOM" id="CLU_010569_0_0_1"/>
<dbReference type="InParanoid" id="Q5RH01"/>
<dbReference type="OMA" id="FDPPEHK"/>
<dbReference type="OrthoDB" id="10038475at2759"/>
<dbReference type="PhylomeDB" id="Q5RH01"/>
<dbReference type="TreeFam" id="TF101164"/>
<dbReference type="Reactome" id="R-DRE-2299718">
    <property type="pathway name" value="Condensation of Prophase Chromosomes"/>
</dbReference>
<dbReference type="PRO" id="PR:Q5RH01"/>
<dbReference type="Proteomes" id="UP000000437">
    <property type="component" value="Chromosome 4"/>
</dbReference>
<dbReference type="Bgee" id="ENSDARG00000033757">
    <property type="expression patterns" value="Expressed in testis and 19 other cell types or tissues"/>
</dbReference>
<dbReference type="GO" id="GO:0000796">
    <property type="term" value="C:condensin complex"/>
    <property type="evidence" value="ECO:0000318"/>
    <property type="project" value="GO_Central"/>
</dbReference>
<dbReference type="GO" id="GO:0005634">
    <property type="term" value="C:nucleus"/>
    <property type="evidence" value="ECO:0000318"/>
    <property type="project" value="GO_Central"/>
</dbReference>
<dbReference type="GO" id="GO:0003682">
    <property type="term" value="F:chromatin binding"/>
    <property type="evidence" value="ECO:0000318"/>
    <property type="project" value="GO_Central"/>
</dbReference>
<dbReference type="GO" id="GO:0010032">
    <property type="term" value="P:meiotic chromosome condensation"/>
    <property type="evidence" value="ECO:0000318"/>
    <property type="project" value="GO_Central"/>
</dbReference>
<dbReference type="GO" id="GO:0051306">
    <property type="term" value="P:mitotic sister chromatid separation"/>
    <property type="evidence" value="ECO:0000318"/>
    <property type="project" value="GO_Central"/>
</dbReference>
<dbReference type="InterPro" id="IPR031737">
    <property type="entry name" value="CNDH2_C"/>
</dbReference>
<dbReference type="InterPro" id="IPR009378">
    <property type="entry name" value="H2_N"/>
</dbReference>
<dbReference type="InterPro" id="IPR031739">
    <property type="entry name" value="Ncaph2"/>
</dbReference>
<dbReference type="PANTHER" id="PTHR14324">
    <property type="entry name" value="CONDENSIN-2 COMPLEX SUBUNIT H2"/>
    <property type="match status" value="1"/>
</dbReference>
<dbReference type="PANTHER" id="PTHR14324:SF3">
    <property type="entry name" value="CONDENSIN-2 COMPLEX SUBUNIT H2"/>
    <property type="match status" value="1"/>
</dbReference>
<dbReference type="Pfam" id="PF16858">
    <property type="entry name" value="CNDH2_C"/>
    <property type="match status" value="1"/>
</dbReference>
<dbReference type="Pfam" id="PF06278">
    <property type="entry name" value="CNDH2_N"/>
    <property type="match status" value="1"/>
</dbReference>
<keyword id="KW-0226">DNA condensation</keyword>
<keyword id="KW-0539">Nucleus</keyword>
<keyword id="KW-1185">Reference proteome</keyword>
<evidence type="ECO:0000250" key="1"/>
<evidence type="ECO:0000256" key="2">
    <source>
        <dbReference type="SAM" id="MobiDB-lite"/>
    </source>
</evidence>
<evidence type="ECO:0000305" key="3"/>
<accession>Q5RH01</accession>
<accession>A6H8R1</accession>
<gene>
    <name type="primary">ncaph2</name>
    <name type="ORF">si:dkey-202b22.2</name>
</gene>
<comment type="function">
    <text evidence="1">Regulatory subunit of the condensin-2 complex, a complex that seems to provide chromosomes with an additional level of organization and rigidity and in establishing mitotic chromosome architecture.</text>
</comment>
<comment type="subunit">
    <text evidence="1">Component of the condensin-2 complex, which contains the smc2 and smc4 heterodimer, and three non SMC subunits, ncapg2, ncaph2 and ncapd3 that probably regulate the complex.</text>
</comment>
<comment type="subcellular location">
    <subcellularLocation>
        <location evidence="1">Nucleus</location>
    </subcellularLocation>
</comment>
<comment type="similarity">
    <text evidence="3">Belongs to the CND2 H2 (condensin-2 subunit 2) family.</text>
</comment>